<keyword id="KW-0143">Chaperone</keyword>
<keyword id="KW-1185">Reference proteome</keyword>
<gene>
    <name evidence="2" type="primary">dmsD</name>
    <name type="ordered locus">Z2581</name>
    <name type="ordered locus">ECs2297</name>
</gene>
<reference key="1">
    <citation type="journal article" date="2001" name="Nature">
        <title>Genome sequence of enterohaemorrhagic Escherichia coli O157:H7.</title>
        <authorList>
            <person name="Perna N.T."/>
            <person name="Plunkett G. III"/>
            <person name="Burland V."/>
            <person name="Mau B."/>
            <person name="Glasner J.D."/>
            <person name="Rose D.J."/>
            <person name="Mayhew G.F."/>
            <person name="Evans P.S."/>
            <person name="Gregor J."/>
            <person name="Kirkpatrick H.A."/>
            <person name="Posfai G."/>
            <person name="Hackett J."/>
            <person name="Klink S."/>
            <person name="Boutin A."/>
            <person name="Shao Y."/>
            <person name="Miller L."/>
            <person name="Grotbeck E.J."/>
            <person name="Davis N.W."/>
            <person name="Lim A."/>
            <person name="Dimalanta E.T."/>
            <person name="Potamousis K."/>
            <person name="Apodaca J."/>
            <person name="Anantharaman T.S."/>
            <person name="Lin J."/>
            <person name="Yen G."/>
            <person name="Schwartz D.C."/>
            <person name="Welch R.A."/>
            <person name="Blattner F.R."/>
        </authorList>
    </citation>
    <scope>NUCLEOTIDE SEQUENCE [LARGE SCALE GENOMIC DNA]</scope>
    <source>
        <strain>O157:H7 / EDL933 / ATCC 700927 / EHEC</strain>
    </source>
</reference>
<reference key="2">
    <citation type="journal article" date="2001" name="DNA Res.">
        <title>Complete genome sequence of enterohemorrhagic Escherichia coli O157:H7 and genomic comparison with a laboratory strain K-12.</title>
        <authorList>
            <person name="Hayashi T."/>
            <person name="Makino K."/>
            <person name="Ohnishi M."/>
            <person name="Kurokawa K."/>
            <person name="Ishii K."/>
            <person name="Yokoyama K."/>
            <person name="Han C.-G."/>
            <person name="Ohtsubo E."/>
            <person name="Nakayama K."/>
            <person name="Murata T."/>
            <person name="Tanaka M."/>
            <person name="Tobe T."/>
            <person name="Iida T."/>
            <person name="Takami H."/>
            <person name="Honda T."/>
            <person name="Sasakawa C."/>
            <person name="Ogasawara N."/>
            <person name="Yasunaga T."/>
            <person name="Kuhara S."/>
            <person name="Shiba T."/>
            <person name="Hattori M."/>
            <person name="Shinagawa H."/>
        </authorList>
    </citation>
    <scope>NUCLEOTIDE SEQUENCE [LARGE SCALE GENOMIC DNA]</scope>
    <source>
        <strain>O157:H7 / Sakai / RIMD 0509952 / EHEC</strain>
    </source>
</reference>
<evidence type="ECO:0000250" key="1"/>
<evidence type="ECO:0000255" key="2">
    <source>
        <dbReference type="HAMAP-Rule" id="MF_00940"/>
    </source>
</evidence>
<evidence type="ECO:0000305" key="3"/>
<organism>
    <name type="scientific">Escherichia coli O157:H7</name>
    <dbReference type="NCBI Taxonomy" id="83334"/>
    <lineage>
        <taxon>Bacteria</taxon>
        <taxon>Pseudomonadati</taxon>
        <taxon>Pseudomonadota</taxon>
        <taxon>Gammaproteobacteria</taxon>
        <taxon>Enterobacterales</taxon>
        <taxon>Enterobacteriaceae</taxon>
        <taxon>Escherichia</taxon>
    </lineage>
</organism>
<feature type="initiator methionine" description="Removed" evidence="1">
    <location>
        <position position="1"/>
    </location>
</feature>
<feature type="chain" id="PRO_0000211650" description="Tat proofreading chaperone DmsD">
    <location>
        <begin position="2"/>
        <end position="204"/>
    </location>
</feature>
<protein>
    <recommendedName>
        <fullName evidence="2">Tat proofreading chaperone DmsD</fullName>
    </recommendedName>
    <alternativeName>
        <fullName evidence="2">DMSO reductase maturation protein</fullName>
    </alternativeName>
    <alternativeName>
        <fullName evidence="2">Twin-arginine leader-binding protein DmsD</fullName>
    </alternativeName>
</protein>
<proteinExistence type="inferred from homology"/>
<name>DMSD_ECO57</name>
<dbReference type="EMBL" id="AE005174">
    <property type="protein sequence ID" value="AAG56578.1"/>
    <property type="status" value="ALT_INIT"/>
    <property type="molecule type" value="Genomic_DNA"/>
</dbReference>
<dbReference type="EMBL" id="BA000007">
    <property type="protein sequence ID" value="BAB35720.1"/>
    <property type="status" value="ALT_INIT"/>
    <property type="molecule type" value="Genomic_DNA"/>
</dbReference>
<dbReference type="PIR" id="A90916">
    <property type="entry name" value="A90916"/>
</dbReference>
<dbReference type="RefSeq" id="NP_310324.2">
    <property type="nucleotide sequence ID" value="NC_002695.1"/>
</dbReference>
<dbReference type="RefSeq" id="WP_000148710.1">
    <property type="nucleotide sequence ID" value="NZ_VOAI01000007.1"/>
</dbReference>
<dbReference type="BMRB" id="P69854"/>
<dbReference type="SMR" id="P69854"/>
<dbReference type="STRING" id="155864.Z2581"/>
<dbReference type="GeneID" id="912340"/>
<dbReference type="GeneID" id="93775734"/>
<dbReference type="KEGG" id="ece:Z2581"/>
<dbReference type="KEGG" id="ecs:ECs_2297"/>
<dbReference type="PATRIC" id="fig|386585.9.peg.2405"/>
<dbReference type="eggNOG" id="COG3381">
    <property type="taxonomic scope" value="Bacteria"/>
</dbReference>
<dbReference type="HOGENOM" id="CLU_077650_7_1_6"/>
<dbReference type="OMA" id="AWHLLPW"/>
<dbReference type="Proteomes" id="UP000000558">
    <property type="component" value="Chromosome"/>
</dbReference>
<dbReference type="Proteomes" id="UP000002519">
    <property type="component" value="Chromosome"/>
</dbReference>
<dbReference type="GO" id="GO:0005048">
    <property type="term" value="F:signal sequence binding"/>
    <property type="evidence" value="ECO:0007669"/>
    <property type="project" value="InterPro"/>
</dbReference>
<dbReference type="GO" id="GO:0061077">
    <property type="term" value="P:chaperone-mediated protein folding"/>
    <property type="evidence" value="ECO:0007669"/>
    <property type="project" value="UniProtKB-UniRule"/>
</dbReference>
<dbReference type="FunFam" id="1.10.3480.10:FF:000002">
    <property type="entry name" value="Tat proofreading chaperone DmsD"/>
    <property type="match status" value="1"/>
</dbReference>
<dbReference type="Gene3D" id="1.10.3480.10">
    <property type="entry name" value="TorD-like"/>
    <property type="match status" value="1"/>
</dbReference>
<dbReference type="HAMAP" id="MF_00940">
    <property type="entry name" value="DmsD_chaperone"/>
    <property type="match status" value="1"/>
</dbReference>
<dbReference type="InterPro" id="IPR026269">
    <property type="entry name" value="DmsD-type"/>
</dbReference>
<dbReference type="InterPro" id="IPR028611">
    <property type="entry name" value="DmsD_chaperone"/>
</dbReference>
<dbReference type="InterPro" id="IPR020945">
    <property type="entry name" value="DMSO/NO3_reduct_chaperone"/>
</dbReference>
<dbReference type="InterPro" id="IPR036411">
    <property type="entry name" value="TorD-like_sf"/>
</dbReference>
<dbReference type="InterPro" id="IPR050289">
    <property type="entry name" value="TorD/DmsD_chaperones"/>
</dbReference>
<dbReference type="NCBIfam" id="NF008632">
    <property type="entry name" value="PRK11621.1"/>
    <property type="match status" value="1"/>
</dbReference>
<dbReference type="PANTHER" id="PTHR34227">
    <property type="entry name" value="CHAPERONE PROTEIN YCDY"/>
    <property type="match status" value="1"/>
</dbReference>
<dbReference type="PANTHER" id="PTHR34227:SF6">
    <property type="entry name" value="TAT PROOFREADING CHAPERONE DMSD"/>
    <property type="match status" value="1"/>
</dbReference>
<dbReference type="Pfam" id="PF02613">
    <property type="entry name" value="Nitrate_red_del"/>
    <property type="match status" value="1"/>
</dbReference>
<dbReference type="PIRSF" id="PIRSF004690">
    <property type="entry name" value="DmsD"/>
    <property type="match status" value="1"/>
</dbReference>
<dbReference type="SUPFAM" id="SSF89155">
    <property type="entry name" value="TorD-like"/>
    <property type="match status" value="1"/>
</dbReference>
<comment type="function">
    <text evidence="2">Required for biogenesis/assembly of DMSO reductase, but not for the interaction of the DmsA signal peptide with the Tat system. May be part of a chaperone cascade complex that facilitates a folding-maturation pathway for the substrate protein.</text>
</comment>
<comment type="similarity">
    <text evidence="2">Belongs to the TorD/DmsD family. DmsD subfamily.</text>
</comment>
<comment type="sequence caution" evidence="3">
    <conflict type="erroneous initiation">
        <sequence resource="EMBL-CDS" id="AAG56578"/>
    </conflict>
    <text>Extended N-terminus.</text>
</comment>
<comment type="sequence caution" evidence="3">
    <conflict type="erroneous initiation">
        <sequence resource="EMBL-CDS" id="BAB35720"/>
    </conflict>
    <text>Extended N-terminus.</text>
</comment>
<sequence>MTHFSQQDNFSVAARVLGALFYYAPESAEAAPLVAVLTSDGWETQWPLPEASLAPLVTAFQTQCEETHAQAWQRLFVGPWALPSPPWGSVWLDRESVLFGDSTLALRQWMREKGIQFEMKQNEPEDHFGSLLLMAAWLAENGRQTECEELLAWHLFPWSTRFLDVFIEKAEHPFYRALGELARLTLAQWQSQLLIPVAVKPLFR</sequence>
<accession>P69854</accession>
<accession>P76174</accession>
<accession>P77270</accession>